<evidence type="ECO:0000250" key="1"/>
<evidence type="ECO:0000305" key="2"/>
<accession>Q39677</accession>
<keyword id="KW-0068">Autocatalytic cleavage</keyword>
<keyword id="KW-0210">Decarboxylase</keyword>
<keyword id="KW-0456">Lyase</keyword>
<keyword id="KW-0620">Polyamine biosynthesis</keyword>
<keyword id="KW-0670">Pyruvate</keyword>
<keyword id="KW-0949">S-adenosyl-L-methionine</keyword>
<keyword id="KW-0704">Schiff base</keyword>
<keyword id="KW-0745">Spermidine biosynthesis</keyword>
<keyword id="KW-0865">Zymogen</keyword>
<comment type="catalytic activity">
    <reaction>
        <text>S-adenosyl-L-methionine + H(+) = S-adenosyl 3-(methylsulfanyl)propylamine + CO2</text>
        <dbReference type="Rhea" id="RHEA:15981"/>
        <dbReference type="ChEBI" id="CHEBI:15378"/>
        <dbReference type="ChEBI" id="CHEBI:16526"/>
        <dbReference type="ChEBI" id="CHEBI:57443"/>
        <dbReference type="ChEBI" id="CHEBI:59789"/>
        <dbReference type="EC" id="4.1.1.50"/>
    </reaction>
</comment>
<comment type="cofactor">
    <cofactor evidence="1">
        <name>pyruvate</name>
        <dbReference type="ChEBI" id="CHEBI:15361"/>
    </cofactor>
    <text evidence="1">Binds 1 pyruvoyl group covalently per subunit.</text>
</comment>
<comment type="pathway">
    <text>Amine and polyamine biosynthesis; S-adenosylmethioninamine biosynthesis; S-adenosylmethioninamine from S-adenosyl-L-methionine: step 1/1.</text>
</comment>
<comment type="PTM">
    <text evidence="1">Is synthesized initially as an inactive proenzyme. Formation of the active enzyme involves a self-maturation process in which the active site pyruvoyl group is generated from an internal serine residue via an autocatalytic post-translational modification. Two non-identical subunits are generated from the proenzyme in this reaction, and the pyruvate is formed at the N-terminus of the alpha chain, which is derived from the carboxyl end of the proenzyme. The post-translation cleavage follows an unusual pathway, termed non-hydrolytic serinolysis, in which the side chain hydroxyl group of the serine supplies its oxygen atom to form the C-terminus of the beta chain, while the remainder of the serine residue undergoes an oxidative deamination to produce ammonia and the pyruvoyl group blocking the N-terminus of the alpha chain (By similarity).</text>
</comment>
<comment type="similarity">
    <text evidence="2">Belongs to the eukaryotic AdoMetDC family.</text>
</comment>
<organism>
    <name type="scientific">Dianthus caryophyllus</name>
    <name type="common">Carnation</name>
    <name type="synonym">Clove pink</name>
    <dbReference type="NCBI Taxonomy" id="3570"/>
    <lineage>
        <taxon>Eukaryota</taxon>
        <taxon>Viridiplantae</taxon>
        <taxon>Streptophyta</taxon>
        <taxon>Embryophyta</taxon>
        <taxon>Tracheophyta</taxon>
        <taxon>Spermatophyta</taxon>
        <taxon>Magnoliopsida</taxon>
        <taxon>eudicotyledons</taxon>
        <taxon>Gunneridae</taxon>
        <taxon>Pentapetalae</taxon>
        <taxon>Caryophyllales</taxon>
        <taxon>Caryophyllaceae</taxon>
        <taxon>Caryophylleae</taxon>
        <taxon>Dianthus</taxon>
    </lineage>
</organism>
<sequence>MTIPMMGNTTDDNNNMTISAIGFEGFEKRLEISFFEPGIFVDPEGKGLRALSKAHLDEILGPAECTIVDSLANESVDSYVLSESSLFVYSYKIIIKTCGTTKLLNSIPPILRLAETLFLDVKSVRYTRGSFIFPGAQSFPHRSFSEEVAVLDNYFAKLGAGSKAIVMGSPGKPQKWHVYSATAETNYDDPVYTLEMCMTGLDKEKASVFFKSQSASAAVMTESSGIRKILPDSVICDFDFEPCGYSMNAIEGPAVSTIHITPEDGFSYASFEAVGYDLQVVDLNLLVERVLACFEPKEFSIAVHADTDTADKVLARNCSVNVIGYSREEGGIEELGLGGSVFYQKFCKGTAPVCPPAPKKTLKCCWKEEEIDEEMEF</sequence>
<proteinExistence type="evidence at transcript level"/>
<name>DCAM2_DIACA</name>
<gene>
    <name type="primary">SAMDC2</name>
    <name type="synonym">SAMDC16</name>
</gene>
<protein>
    <recommendedName>
        <fullName>S-adenosylmethionine decarboxylase proenzyme 2</fullName>
        <shortName>AdoMetDC 2</shortName>
        <shortName>SAMDC 2</shortName>
        <ecNumber>4.1.1.50</ecNumber>
    </recommendedName>
    <component>
        <recommendedName>
            <fullName>S-adenosylmethionine decarboxylase 2 alpha chain</fullName>
        </recommendedName>
    </component>
    <component>
        <recommendedName>
            <fullName>S-adenosylmethionine decarboxylase 2 beta chain</fullName>
        </recommendedName>
    </component>
</protein>
<reference key="1">
    <citation type="online journal article" date="1995" name="Plant Gene Register">
        <title>Nucleotide sequence of cDNAs encoding S-adenosylmethionine decarboxylase from carnation flower.</title>
        <authorList>
            <person name="Lee M.M."/>
            <person name="Lee S.H."/>
            <person name="Park K.Y."/>
        </authorList>
        <locator>PGR95-139</locator>
    </citation>
    <scope>NUCLEOTIDE SEQUENCE [MRNA]</scope>
    <source>
        <strain>cv. White Sim</strain>
        <tissue>Petal</tissue>
    </source>
</reference>
<feature type="chain" id="PRO_0000030005" description="S-adenosylmethionine decarboxylase 2 beta chain" evidence="1">
    <location>
        <begin position="1"/>
        <end position="83"/>
    </location>
</feature>
<feature type="chain" id="PRO_0000030006" description="S-adenosylmethionine decarboxylase 2 alpha chain" evidence="1">
    <location>
        <begin position="84"/>
        <end position="377"/>
    </location>
</feature>
<feature type="active site" evidence="1">
    <location>
        <position position="24"/>
    </location>
</feature>
<feature type="active site" evidence="1">
    <location>
        <position position="27"/>
    </location>
</feature>
<feature type="active site" description="Schiff-base intermediate with substrate; via pyruvic acid" evidence="1">
    <location>
        <position position="84"/>
    </location>
</feature>
<feature type="active site" description="Proton donor; for catalytic activity" evidence="1">
    <location>
        <position position="98"/>
    </location>
</feature>
<feature type="active site" description="Proton acceptor; for processing activity" evidence="1">
    <location>
        <position position="246"/>
    </location>
</feature>
<feature type="active site" description="Proton acceptor; for processing activity" evidence="1">
    <location>
        <position position="259"/>
    </location>
</feature>
<feature type="site" description="Cleavage (non-hydrolytic); by autolysis" evidence="1">
    <location>
        <begin position="83"/>
        <end position="84"/>
    </location>
</feature>
<feature type="modified residue" description="Pyruvic acid (Ser); by autocatalysis" evidence="1">
    <location>
        <position position="84"/>
    </location>
</feature>
<dbReference type="EC" id="4.1.1.50"/>
<dbReference type="EMBL" id="U38527">
    <property type="protein sequence ID" value="AAD09840.1"/>
    <property type="molecule type" value="mRNA"/>
</dbReference>
<dbReference type="PIR" id="T10708">
    <property type="entry name" value="T10708"/>
</dbReference>
<dbReference type="SMR" id="Q39677"/>
<dbReference type="UniPathway" id="UPA00331">
    <property type="reaction ID" value="UER00451"/>
</dbReference>
<dbReference type="GO" id="GO:0005829">
    <property type="term" value="C:cytosol"/>
    <property type="evidence" value="ECO:0007669"/>
    <property type="project" value="TreeGrafter"/>
</dbReference>
<dbReference type="GO" id="GO:0004014">
    <property type="term" value="F:adenosylmethionine decarboxylase activity"/>
    <property type="evidence" value="ECO:0007669"/>
    <property type="project" value="UniProtKB-EC"/>
</dbReference>
<dbReference type="GO" id="GO:0008295">
    <property type="term" value="P:spermidine biosynthetic process"/>
    <property type="evidence" value="ECO:0007669"/>
    <property type="project" value="UniProtKB-KW"/>
</dbReference>
<dbReference type="GO" id="GO:0006597">
    <property type="term" value="P:spermine biosynthetic process"/>
    <property type="evidence" value="ECO:0007669"/>
    <property type="project" value="InterPro"/>
</dbReference>
<dbReference type="FunFam" id="3.30.360.50:FF:000001">
    <property type="entry name" value="S-adenosylmethionine decarboxylase proenzyme"/>
    <property type="match status" value="1"/>
</dbReference>
<dbReference type="FunFam" id="3.60.90.10:FF:000002">
    <property type="entry name" value="S-adenosylmethionine decarboxylase proenzyme"/>
    <property type="match status" value="1"/>
</dbReference>
<dbReference type="Gene3D" id="3.30.360.50">
    <property type="entry name" value="S-adenosylmethionine decarboxylase"/>
    <property type="match status" value="1"/>
</dbReference>
<dbReference type="Gene3D" id="3.60.90.10">
    <property type="entry name" value="S-adenosylmethionine decarboxylase"/>
    <property type="match status" value="1"/>
</dbReference>
<dbReference type="InterPro" id="IPR048283">
    <property type="entry name" value="AdoMetDC-like"/>
</dbReference>
<dbReference type="InterPro" id="IPR001985">
    <property type="entry name" value="S-AdoMet_decarboxylase_euk"/>
</dbReference>
<dbReference type="InterPro" id="IPR016067">
    <property type="entry name" value="S-AdoMet_deCO2ase_core"/>
</dbReference>
<dbReference type="InterPro" id="IPR018166">
    <property type="entry name" value="S-AdoMet_deCO2ase_CS"/>
</dbReference>
<dbReference type="NCBIfam" id="TIGR00535">
    <property type="entry name" value="SAM_DCase"/>
    <property type="match status" value="1"/>
</dbReference>
<dbReference type="PANTHER" id="PTHR11570">
    <property type="entry name" value="S-ADENOSYLMETHIONINE DECARBOXYLASE"/>
    <property type="match status" value="1"/>
</dbReference>
<dbReference type="PANTHER" id="PTHR11570:SF15">
    <property type="entry name" value="S-ADENOSYLMETHIONINE DECARBOXYLASE PROENZYME 3"/>
    <property type="match status" value="1"/>
</dbReference>
<dbReference type="Pfam" id="PF01536">
    <property type="entry name" value="SAM_decarbox"/>
    <property type="match status" value="1"/>
</dbReference>
<dbReference type="PIRSF" id="PIRSF001355">
    <property type="entry name" value="S-AdenosylMet_decarboxylase"/>
    <property type="match status" value="1"/>
</dbReference>
<dbReference type="SUPFAM" id="SSF56276">
    <property type="entry name" value="S-adenosylmethionine decarboxylase"/>
    <property type="match status" value="1"/>
</dbReference>
<dbReference type="PROSITE" id="PS01336">
    <property type="entry name" value="ADOMETDC"/>
    <property type="match status" value="1"/>
</dbReference>